<organism>
    <name type="scientific">Dinoroseobacter shibae (strain DSM 16493 / NCIMB 14021 / DFL 12)</name>
    <dbReference type="NCBI Taxonomy" id="398580"/>
    <lineage>
        <taxon>Bacteria</taxon>
        <taxon>Pseudomonadati</taxon>
        <taxon>Pseudomonadota</taxon>
        <taxon>Alphaproteobacteria</taxon>
        <taxon>Rhodobacterales</taxon>
        <taxon>Roseobacteraceae</taxon>
        <taxon>Dinoroseobacter</taxon>
    </lineage>
</organism>
<protein>
    <recommendedName>
        <fullName evidence="1">Large ribosomal subunit protein uL5</fullName>
    </recommendedName>
    <alternativeName>
        <fullName evidence="2">50S ribosomal protein L5</fullName>
    </alternativeName>
</protein>
<dbReference type="EMBL" id="CP000830">
    <property type="protein sequence ID" value="ABV92046.1"/>
    <property type="molecule type" value="Genomic_DNA"/>
</dbReference>
<dbReference type="RefSeq" id="WP_012176976.1">
    <property type="nucleotide sequence ID" value="NC_009952.1"/>
</dbReference>
<dbReference type="SMR" id="A8LM69"/>
<dbReference type="STRING" id="398580.Dshi_0297"/>
<dbReference type="KEGG" id="dsh:Dshi_0297"/>
<dbReference type="eggNOG" id="COG0094">
    <property type="taxonomic scope" value="Bacteria"/>
</dbReference>
<dbReference type="HOGENOM" id="CLU_061015_2_1_5"/>
<dbReference type="OrthoDB" id="9806626at2"/>
<dbReference type="Proteomes" id="UP000006833">
    <property type="component" value="Chromosome"/>
</dbReference>
<dbReference type="GO" id="GO:1990904">
    <property type="term" value="C:ribonucleoprotein complex"/>
    <property type="evidence" value="ECO:0007669"/>
    <property type="project" value="UniProtKB-KW"/>
</dbReference>
<dbReference type="GO" id="GO:0005840">
    <property type="term" value="C:ribosome"/>
    <property type="evidence" value="ECO:0007669"/>
    <property type="project" value="UniProtKB-KW"/>
</dbReference>
<dbReference type="GO" id="GO:0019843">
    <property type="term" value="F:rRNA binding"/>
    <property type="evidence" value="ECO:0007669"/>
    <property type="project" value="UniProtKB-UniRule"/>
</dbReference>
<dbReference type="GO" id="GO:0003735">
    <property type="term" value="F:structural constituent of ribosome"/>
    <property type="evidence" value="ECO:0007669"/>
    <property type="project" value="InterPro"/>
</dbReference>
<dbReference type="GO" id="GO:0000049">
    <property type="term" value="F:tRNA binding"/>
    <property type="evidence" value="ECO:0007669"/>
    <property type="project" value="UniProtKB-UniRule"/>
</dbReference>
<dbReference type="GO" id="GO:0006412">
    <property type="term" value="P:translation"/>
    <property type="evidence" value="ECO:0007669"/>
    <property type="project" value="UniProtKB-UniRule"/>
</dbReference>
<dbReference type="FunFam" id="3.30.1440.10:FF:000001">
    <property type="entry name" value="50S ribosomal protein L5"/>
    <property type="match status" value="1"/>
</dbReference>
<dbReference type="Gene3D" id="3.30.1440.10">
    <property type="match status" value="1"/>
</dbReference>
<dbReference type="HAMAP" id="MF_01333_B">
    <property type="entry name" value="Ribosomal_uL5_B"/>
    <property type="match status" value="1"/>
</dbReference>
<dbReference type="InterPro" id="IPR002132">
    <property type="entry name" value="Ribosomal_uL5"/>
</dbReference>
<dbReference type="InterPro" id="IPR020930">
    <property type="entry name" value="Ribosomal_uL5_bac-type"/>
</dbReference>
<dbReference type="InterPro" id="IPR031309">
    <property type="entry name" value="Ribosomal_uL5_C"/>
</dbReference>
<dbReference type="InterPro" id="IPR020929">
    <property type="entry name" value="Ribosomal_uL5_CS"/>
</dbReference>
<dbReference type="InterPro" id="IPR022803">
    <property type="entry name" value="Ribosomal_uL5_dom_sf"/>
</dbReference>
<dbReference type="InterPro" id="IPR031310">
    <property type="entry name" value="Ribosomal_uL5_N"/>
</dbReference>
<dbReference type="NCBIfam" id="NF000585">
    <property type="entry name" value="PRK00010.1"/>
    <property type="match status" value="1"/>
</dbReference>
<dbReference type="PANTHER" id="PTHR11994">
    <property type="entry name" value="60S RIBOSOMAL PROTEIN L11-RELATED"/>
    <property type="match status" value="1"/>
</dbReference>
<dbReference type="Pfam" id="PF00281">
    <property type="entry name" value="Ribosomal_L5"/>
    <property type="match status" value="1"/>
</dbReference>
<dbReference type="Pfam" id="PF00673">
    <property type="entry name" value="Ribosomal_L5_C"/>
    <property type="match status" value="1"/>
</dbReference>
<dbReference type="PIRSF" id="PIRSF002161">
    <property type="entry name" value="Ribosomal_L5"/>
    <property type="match status" value="1"/>
</dbReference>
<dbReference type="SUPFAM" id="SSF55282">
    <property type="entry name" value="RL5-like"/>
    <property type="match status" value="1"/>
</dbReference>
<dbReference type="PROSITE" id="PS00358">
    <property type="entry name" value="RIBOSOMAL_L5"/>
    <property type="match status" value="1"/>
</dbReference>
<gene>
    <name evidence="1" type="primary">rplE</name>
    <name type="ordered locus">Dshi_0297</name>
</gene>
<sequence>MLDAATYTPRLKAAYAETIRAAMKEEFGYKNDMMIPRLDKIVLNIGAGAEAVKDSKKAKSAQDDLSAIAGQRAVITKAKKSIAGFRVREDMPLGAKVTLRGDRMYEFLDRLITIAMPRIRDFRGVKGSAFDGRGNYALGLKEHIVFPEINFDKVDEVWGMDIIICTTAASDAEAKALLKHFNMPFNS</sequence>
<comment type="function">
    <text evidence="1">This is one of the proteins that bind and probably mediate the attachment of the 5S RNA into the large ribosomal subunit, where it forms part of the central protuberance. In the 70S ribosome it contacts protein S13 of the 30S subunit (bridge B1b), connecting the 2 subunits; this bridge is implicated in subunit movement. Contacts the P site tRNA; the 5S rRNA and some of its associated proteins might help stabilize positioning of ribosome-bound tRNAs.</text>
</comment>
<comment type="subunit">
    <text evidence="1">Part of the 50S ribosomal subunit; part of the 5S rRNA/L5/L18/L25 subcomplex. Contacts the 5S rRNA and the P site tRNA. Forms a bridge to the 30S subunit in the 70S ribosome.</text>
</comment>
<comment type="similarity">
    <text evidence="1">Belongs to the universal ribosomal protein uL5 family.</text>
</comment>
<reference key="1">
    <citation type="journal article" date="2010" name="ISME J.">
        <title>The complete genome sequence of the algal symbiont Dinoroseobacter shibae: a hitchhiker's guide to life in the sea.</title>
        <authorList>
            <person name="Wagner-Dobler I."/>
            <person name="Ballhausen B."/>
            <person name="Berger M."/>
            <person name="Brinkhoff T."/>
            <person name="Buchholz I."/>
            <person name="Bunk B."/>
            <person name="Cypionka H."/>
            <person name="Daniel R."/>
            <person name="Drepper T."/>
            <person name="Gerdts G."/>
            <person name="Hahnke S."/>
            <person name="Han C."/>
            <person name="Jahn D."/>
            <person name="Kalhoefer D."/>
            <person name="Kiss H."/>
            <person name="Klenk H.P."/>
            <person name="Kyrpides N."/>
            <person name="Liebl W."/>
            <person name="Liesegang H."/>
            <person name="Meincke L."/>
            <person name="Pati A."/>
            <person name="Petersen J."/>
            <person name="Piekarski T."/>
            <person name="Pommerenke C."/>
            <person name="Pradella S."/>
            <person name="Pukall R."/>
            <person name="Rabus R."/>
            <person name="Stackebrandt E."/>
            <person name="Thole S."/>
            <person name="Thompson L."/>
            <person name="Tielen P."/>
            <person name="Tomasch J."/>
            <person name="von Jan M."/>
            <person name="Wanphrut N."/>
            <person name="Wichels A."/>
            <person name="Zech H."/>
            <person name="Simon M."/>
        </authorList>
    </citation>
    <scope>NUCLEOTIDE SEQUENCE [LARGE SCALE GENOMIC DNA]</scope>
    <source>
        <strain>DSM 16493 / NCIMB 14021 / DFL 12</strain>
    </source>
</reference>
<keyword id="KW-1185">Reference proteome</keyword>
<keyword id="KW-0687">Ribonucleoprotein</keyword>
<keyword id="KW-0689">Ribosomal protein</keyword>
<keyword id="KW-0694">RNA-binding</keyword>
<keyword id="KW-0699">rRNA-binding</keyword>
<keyword id="KW-0820">tRNA-binding</keyword>
<name>RL5_DINSH</name>
<feature type="chain" id="PRO_1000086589" description="Large ribosomal subunit protein uL5">
    <location>
        <begin position="1"/>
        <end position="187"/>
    </location>
</feature>
<proteinExistence type="inferred from homology"/>
<evidence type="ECO:0000255" key="1">
    <source>
        <dbReference type="HAMAP-Rule" id="MF_01333"/>
    </source>
</evidence>
<evidence type="ECO:0000305" key="2"/>
<accession>A8LM69</accession>